<reference key="1">
    <citation type="journal article" date="2005" name="J. Bacteriol.">
        <title>Completion of the genome sequence of Brucella abortus and comparison to the highly similar genomes of Brucella melitensis and Brucella suis.</title>
        <authorList>
            <person name="Halling S.M."/>
            <person name="Peterson-Burch B.D."/>
            <person name="Bricker B.J."/>
            <person name="Zuerner R.L."/>
            <person name="Qing Z."/>
            <person name="Li L.-L."/>
            <person name="Kapur V."/>
            <person name="Alt D.P."/>
            <person name="Olsen S.C."/>
        </authorList>
    </citation>
    <scope>NUCLEOTIDE SEQUENCE [LARGE SCALE GENOMIC DNA]</scope>
    <source>
        <strain>9-941</strain>
    </source>
</reference>
<protein>
    <recommendedName>
        <fullName evidence="1">Recombination protein RecR</fullName>
    </recommendedName>
</protein>
<keyword id="KW-0227">DNA damage</keyword>
<keyword id="KW-0233">DNA recombination</keyword>
<keyword id="KW-0234">DNA repair</keyword>
<keyword id="KW-0479">Metal-binding</keyword>
<keyword id="KW-0862">Zinc</keyword>
<keyword id="KW-0863">Zinc-finger</keyword>
<proteinExistence type="inferred from homology"/>
<accession>Q57FY2</accession>
<feature type="chain" id="PRO_0000190293" description="Recombination protein RecR">
    <location>
        <begin position="1"/>
        <end position="201"/>
    </location>
</feature>
<feature type="domain" description="Toprim" evidence="1">
    <location>
        <begin position="83"/>
        <end position="178"/>
    </location>
</feature>
<feature type="zinc finger region" description="C4-type" evidence="1">
    <location>
        <begin position="60"/>
        <end position="75"/>
    </location>
</feature>
<comment type="function">
    <text evidence="1">May play a role in DNA repair. It seems to be involved in an RecBC-independent recombinational process of DNA repair. It may act with RecF and RecO.</text>
</comment>
<comment type="similarity">
    <text evidence="1">Belongs to the RecR family.</text>
</comment>
<dbReference type="EMBL" id="AE017223">
    <property type="protein sequence ID" value="AAX73452.1"/>
    <property type="molecule type" value="Genomic_DNA"/>
</dbReference>
<dbReference type="RefSeq" id="WP_002965279.1">
    <property type="nucleotide sequence ID" value="NC_006932.1"/>
</dbReference>
<dbReference type="SMR" id="Q57FY2"/>
<dbReference type="EnsemblBacteria" id="AAX73452">
    <property type="protein sequence ID" value="AAX73452"/>
    <property type="gene ID" value="BruAb1_0032"/>
</dbReference>
<dbReference type="GeneID" id="97534533"/>
<dbReference type="KEGG" id="bmb:BruAb1_0032"/>
<dbReference type="HOGENOM" id="CLU_060739_1_1_5"/>
<dbReference type="Proteomes" id="UP000000540">
    <property type="component" value="Chromosome I"/>
</dbReference>
<dbReference type="GO" id="GO:0003677">
    <property type="term" value="F:DNA binding"/>
    <property type="evidence" value="ECO:0007669"/>
    <property type="project" value="UniProtKB-UniRule"/>
</dbReference>
<dbReference type="GO" id="GO:0008270">
    <property type="term" value="F:zinc ion binding"/>
    <property type="evidence" value="ECO:0007669"/>
    <property type="project" value="UniProtKB-KW"/>
</dbReference>
<dbReference type="GO" id="GO:0006310">
    <property type="term" value="P:DNA recombination"/>
    <property type="evidence" value="ECO:0007669"/>
    <property type="project" value="UniProtKB-UniRule"/>
</dbReference>
<dbReference type="GO" id="GO:0006281">
    <property type="term" value="P:DNA repair"/>
    <property type="evidence" value="ECO:0007669"/>
    <property type="project" value="UniProtKB-UniRule"/>
</dbReference>
<dbReference type="CDD" id="cd01025">
    <property type="entry name" value="TOPRIM_recR"/>
    <property type="match status" value="1"/>
</dbReference>
<dbReference type="Gene3D" id="3.40.1360.10">
    <property type="match status" value="1"/>
</dbReference>
<dbReference type="Gene3D" id="6.10.250.240">
    <property type="match status" value="1"/>
</dbReference>
<dbReference type="Gene3D" id="1.10.8.420">
    <property type="entry name" value="RecR Domain 1"/>
    <property type="match status" value="1"/>
</dbReference>
<dbReference type="HAMAP" id="MF_00017">
    <property type="entry name" value="RecR"/>
    <property type="match status" value="1"/>
</dbReference>
<dbReference type="InterPro" id="IPR000093">
    <property type="entry name" value="DNA_Rcmb_RecR"/>
</dbReference>
<dbReference type="InterPro" id="IPR023627">
    <property type="entry name" value="Rcmb_RecR"/>
</dbReference>
<dbReference type="InterPro" id="IPR015967">
    <property type="entry name" value="Rcmb_RecR_Znf"/>
</dbReference>
<dbReference type="InterPro" id="IPR006171">
    <property type="entry name" value="TOPRIM_dom"/>
</dbReference>
<dbReference type="InterPro" id="IPR034137">
    <property type="entry name" value="TOPRIM_RecR"/>
</dbReference>
<dbReference type="NCBIfam" id="TIGR00615">
    <property type="entry name" value="recR"/>
    <property type="match status" value="1"/>
</dbReference>
<dbReference type="PANTHER" id="PTHR30446">
    <property type="entry name" value="RECOMBINATION PROTEIN RECR"/>
    <property type="match status" value="1"/>
</dbReference>
<dbReference type="PANTHER" id="PTHR30446:SF0">
    <property type="entry name" value="RECOMBINATION PROTEIN RECR"/>
    <property type="match status" value="1"/>
</dbReference>
<dbReference type="Pfam" id="PF21175">
    <property type="entry name" value="RecR_C"/>
    <property type="match status" value="1"/>
</dbReference>
<dbReference type="Pfam" id="PF21176">
    <property type="entry name" value="RecR_HhH"/>
    <property type="match status" value="1"/>
</dbReference>
<dbReference type="Pfam" id="PF02132">
    <property type="entry name" value="RecR_ZnF"/>
    <property type="match status" value="1"/>
</dbReference>
<dbReference type="Pfam" id="PF13662">
    <property type="entry name" value="Toprim_4"/>
    <property type="match status" value="1"/>
</dbReference>
<dbReference type="SMART" id="SM00493">
    <property type="entry name" value="TOPRIM"/>
    <property type="match status" value="1"/>
</dbReference>
<dbReference type="SUPFAM" id="SSF111304">
    <property type="entry name" value="Recombination protein RecR"/>
    <property type="match status" value="1"/>
</dbReference>
<dbReference type="PROSITE" id="PS01300">
    <property type="entry name" value="RECR"/>
    <property type="match status" value="1"/>
</dbReference>
<dbReference type="PROSITE" id="PS50880">
    <property type="entry name" value="TOPRIM"/>
    <property type="match status" value="1"/>
</dbReference>
<evidence type="ECO:0000255" key="1">
    <source>
        <dbReference type="HAMAP-Rule" id="MF_00017"/>
    </source>
</evidence>
<sequence length="201" mass="21556">MSKRIAGPEIERLIQLLARVPGLGPRSARRAALHLIKKKEALLVPLGGAMQEAAEKVRICSCCGNVDTSDPCTICTDERRDPATLIVVEDVSDLWALERAGTMNVRYHVLGGRLSPLDGIGPDDLNIKGLVERVASGAIKEVILAVNATVEGQTTAHYITDQLSNFDVRVTRLAHGVPVGGELDYLDEGTLAAALRARTTL</sequence>
<organism>
    <name type="scientific">Brucella abortus biovar 1 (strain 9-941)</name>
    <dbReference type="NCBI Taxonomy" id="262698"/>
    <lineage>
        <taxon>Bacteria</taxon>
        <taxon>Pseudomonadati</taxon>
        <taxon>Pseudomonadota</taxon>
        <taxon>Alphaproteobacteria</taxon>
        <taxon>Hyphomicrobiales</taxon>
        <taxon>Brucellaceae</taxon>
        <taxon>Brucella/Ochrobactrum group</taxon>
        <taxon>Brucella</taxon>
    </lineage>
</organism>
<gene>
    <name evidence="1" type="primary">recR</name>
    <name type="ordered locus">BruAb1_0032</name>
</gene>
<name>RECR_BRUAB</name>